<accession>P33297</accession>
<accession>D6W2H6</accession>
<sequence length="434" mass="48256">MATLEELDAQTLPGDDELDQEILNLSTQELQTRAKLLDNEIRIFRSELQRLSHENNVMLEKIKDNKEKIKNNRQLPYLVANVVEVMDMNEIEDKENSESTTQGGNVNLDNTAVGKAAVVKTSSRQTVFLPMVGLVDPDKLKPNDLVGVNKDSYLILDTLPSEFDSRVKAMEVDEKPTETYSDVGGLDKQIEELVEAIVLPMKRADKFKDMGIRAPKGALMYGPPGTGKTLLARACAAQTNATFLKLAAPQLVQMYIGEGAKLVRDAFALAKEKAPTIIFIDELDAIGTKRFDSEKSGDREVQRTMLELLNQLDGFSSDDRVKVLAATNRVDVLDPALLRSGRLDRKIEFPLPSEDSRAQILQIHSRKMTTDDDINWQELARSTDEFNGAQLKAVTVEAGMIALRNGQSSVKHEDFVEGISEVQARKSKSVSFYA</sequence>
<reference key="1">
    <citation type="journal article" date="1994" name="Yeast">
        <title>Identification of a set of yeast genes coding for a novel family of putative ATPases with high similarity to constituents of the 26S protease complex.</title>
        <authorList>
            <person name="Schnall R."/>
            <person name="Mannhaupt G."/>
            <person name="Stucka R."/>
            <person name="Tauer R."/>
            <person name="Ehnle S."/>
            <person name="Schwarzlose C."/>
            <person name="Vetter I."/>
            <person name="Feldmann H."/>
        </authorList>
    </citation>
    <scope>NUCLEOTIDE SEQUENCE [GENOMIC DNA]</scope>
    <source>
        <strain>C836</strain>
    </source>
</reference>
<reference key="2">
    <citation type="journal article" date="1996" name="Yeast">
        <title>Sequencing and analysis of 51 kb on the right arm of chromosome XV from Saccharomyces cerevisiae reveals 30 open reading frames.</title>
        <authorList>
            <person name="Wiemann S."/>
            <person name="Rechmann S."/>
            <person name="Benes V."/>
            <person name="Voss H."/>
            <person name="Schwager C."/>
            <person name="Vlcek C."/>
            <person name="Stegemann J."/>
            <person name="Zimmermann J."/>
            <person name="Erfle H."/>
            <person name="Paces V."/>
            <person name="Ansorge W."/>
        </authorList>
    </citation>
    <scope>NUCLEOTIDE SEQUENCE [GENOMIC DNA]</scope>
    <source>
        <strain>ATCC 96604 / S288c / FY1679</strain>
    </source>
</reference>
<reference key="3">
    <citation type="journal article" date="1997" name="Yeast">
        <title>DNA sequencing and analysis of 130 kb from yeast chromosome XV.</title>
        <authorList>
            <person name="Voss H."/>
            <person name="Benes V."/>
            <person name="Andrade M.A."/>
            <person name="Valencia A."/>
            <person name="Rechmann S."/>
            <person name="Teodoru C."/>
            <person name="Schwager C."/>
            <person name="Paces V."/>
            <person name="Sander C."/>
            <person name="Ansorge W."/>
        </authorList>
    </citation>
    <scope>NUCLEOTIDE SEQUENCE [GENOMIC DNA]</scope>
    <source>
        <strain>ATCC 96604 / S288c / FY1679</strain>
    </source>
</reference>
<reference key="4">
    <citation type="journal article" date="1997" name="Nature">
        <title>The nucleotide sequence of Saccharomyces cerevisiae chromosome XV.</title>
        <authorList>
            <person name="Dujon B."/>
            <person name="Albermann K."/>
            <person name="Aldea M."/>
            <person name="Alexandraki D."/>
            <person name="Ansorge W."/>
            <person name="Arino J."/>
            <person name="Benes V."/>
            <person name="Bohn C."/>
            <person name="Bolotin-Fukuhara M."/>
            <person name="Bordonne R."/>
            <person name="Boyer J."/>
            <person name="Camasses A."/>
            <person name="Casamayor A."/>
            <person name="Casas C."/>
            <person name="Cheret G."/>
            <person name="Cziepluch C."/>
            <person name="Daignan-Fornier B."/>
            <person name="Dang V.-D."/>
            <person name="de Haan M."/>
            <person name="Delius H."/>
            <person name="Durand P."/>
            <person name="Fairhead C."/>
            <person name="Feldmann H."/>
            <person name="Gaillon L."/>
            <person name="Galisson F."/>
            <person name="Gamo F.-J."/>
            <person name="Gancedo C."/>
            <person name="Goffeau A."/>
            <person name="Goulding S.E."/>
            <person name="Grivell L.A."/>
            <person name="Habbig B."/>
            <person name="Hand N.J."/>
            <person name="Hani J."/>
            <person name="Hattenhorst U."/>
            <person name="Hebling U."/>
            <person name="Hernando Y."/>
            <person name="Herrero E."/>
            <person name="Heumann K."/>
            <person name="Hiesel R."/>
            <person name="Hilger F."/>
            <person name="Hofmann B."/>
            <person name="Hollenberg C.P."/>
            <person name="Hughes B."/>
            <person name="Jauniaux J.-C."/>
            <person name="Kalogeropoulos A."/>
            <person name="Katsoulou C."/>
            <person name="Kordes E."/>
            <person name="Lafuente M.J."/>
            <person name="Landt O."/>
            <person name="Louis E.J."/>
            <person name="Maarse A.C."/>
            <person name="Madania A."/>
            <person name="Mannhaupt G."/>
            <person name="Marck C."/>
            <person name="Martin R.P."/>
            <person name="Mewes H.-W."/>
            <person name="Michaux G."/>
            <person name="Paces V."/>
            <person name="Parle-McDermott A.G."/>
            <person name="Pearson B.M."/>
            <person name="Perrin A."/>
            <person name="Pettersson B."/>
            <person name="Poch O."/>
            <person name="Pohl T.M."/>
            <person name="Poirey R."/>
            <person name="Portetelle D."/>
            <person name="Pujol A."/>
            <person name="Purnelle B."/>
            <person name="Ramezani Rad M."/>
            <person name="Rechmann S."/>
            <person name="Schwager C."/>
            <person name="Schweizer M."/>
            <person name="Sor F."/>
            <person name="Sterky F."/>
            <person name="Tarassov I.A."/>
            <person name="Teodoru C."/>
            <person name="Tettelin H."/>
            <person name="Thierry A."/>
            <person name="Tobiasch E."/>
            <person name="Tzermia M."/>
            <person name="Uhlen M."/>
            <person name="Unseld M."/>
            <person name="Valens M."/>
            <person name="Vandenbol M."/>
            <person name="Vetter I."/>
            <person name="Vlcek C."/>
            <person name="Voet M."/>
            <person name="Volckaert G."/>
            <person name="Voss H."/>
            <person name="Wambutt R."/>
            <person name="Wedler H."/>
            <person name="Wiemann S."/>
            <person name="Winsor B."/>
            <person name="Wolfe K.H."/>
            <person name="Zollner A."/>
            <person name="Zumstein E."/>
            <person name="Kleine K."/>
        </authorList>
    </citation>
    <scope>NUCLEOTIDE SEQUENCE [LARGE SCALE GENOMIC DNA]</scope>
    <source>
        <strain>ATCC 204508 / S288c</strain>
    </source>
</reference>
<reference key="5">
    <citation type="journal article" date="2014" name="G3 (Bethesda)">
        <title>The reference genome sequence of Saccharomyces cerevisiae: Then and now.</title>
        <authorList>
            <person name="Engel S.R."/>
            <person name="Dietrich F.S."/>
            <person name="Fisk D.G."/>
            <person name="Binkley G."/>
            <person name="Balakrishnan R."/>
            <person name="Costanzo M.C."/>
            <person name="Dwight S.S."/>
            <person name="Hitz B.C."/>
            <person name="Karra K."/>
            <person name="Nash R.S."/>
            <person name="Weng S."/>
            <person name="Wong E.D."/>
            <person name="Lloyd P."/>
            <person name="Skrzypek M.S."/>
            <person name="Miyasato S.R."/>
            <person name="Simison M."/>
            <person name="Cherry J.M."/>
        </authorList>
    </citation>
    <scope>GENOME REANNOTATION</scope>
    <source>
        <strain>ATCC 204508 / S288c</strain>
    </source>
</reference>
<reference key="6">
    <citation type="journal article" date="2003" name="Arch. Biochem. Biophys.">
        <title>N-terminal modifications of the 19S regulatory particle subunits of the yeast proteasome.</title>
        <authorList>
            <person name="Kimura Y."/>
            <person name="Saeki Y."/>
            <person name="Yokosawa H."/>
            <person name="Polevoda B."/>
            <person name="Sherman F."/>
            <person name="Hirano H."/>
        </authorList>
    </citation>
    <scope>PROTEIN SEQUENCE OF 2-9</scope>
    <scope>ACETYLATION AT ALA-2</scope>
</reference>
<reference key="7">
    <citation type="journal article" date="2008" name="Mol. Cell. Proteomics">
        <title>A multidimensional chromatography technology for in-depth phosphoproteome analysis.</title>
        <authorList>
            <person name="Albuquerque C.P."/>
            <person name="Smolka M.B."/>
            <person name="Payne S.H."/>
            <person name="Bafna V."/>
            <person name="Eng J."/>
            <person name="Zhou H."/>
        </authorList>
    </citation>
    <scope>IDENTIFICATION BY MASS SPECTROMETRY [LARGE SCALE ANALYSIS]</scope>
</reference>
<reference key="8">
    <citation type="journal article" date="2009" name="Science">
        <title>Global analysis of Cdk1 substrate phosphorylation sites provides insights into evolution.</title>
        <authorList>
            <person name="Holt L.J."/>
            <person name="Tuch B.B."/>
            <person name="Villen J."/>
            <person name="Johnson A.D."/>
            <person name="Gygi S.P."/>
            <person name="Morgan D.O."/>
        </authorList>
    </citation>
    <scope>PHOSPHORYLATION [LARGE SCALE ANALYSIS] AT TYR-180</scope>
    <scope>IDENTIFICATION BY MASS SPECTROMETRY [LARGE SCALE ANALYSIS]</scope>
</reference>
<reference key="9">
    <citation type="journal article" date="2012" name="Proc. Natl. Acad. Sci. U.S.A.">
        <title>N-terminal acetylome analyses and functional insights of the N-terminal acetyltransferase NatB.</title>
        <authorList>
            <person name="Van Damme P."/>
            <person name="Lasa M."/>
            <person name="Polevoda B."/>
            <person name="Gazquez C."/>
            <person name="Elosegui-Artola A."/>
            <person name="Kim D.S."/>
            <person name="De Juan-Pardo E."/>
            <person name="Demeyer K."/>
            <person name="Hole K."/>
            <person name="Larrea E."/>
            <person name="Timmerman E."/>
            <person name="Prieto J."/>
            <person name="Arnesen T."/>
            <person name="Sherman F."/>
            <person name="Gevaert K."/>
            <person name="Aldabe R."/>
        </authorList>
    </citation>
    <scope>ACETYLATION [LARGE SCALE ANALYSIS] AT ALA-2</scope>
    <scope>CLEAVAGE OF INITIATOR METHIONINE [LARGE SCALE ANALYSIS]</scope>
    <scope>IDENTIFICATION BY MASS SPECTROMETRY [LARGE SCALE ANALYSIS]</scope>
</reference>
<reference key="10">
    <citation type="journal article" date="2012" name="Proc. Natl. Acad. Sci. U.S.A.">
        <title>Near-atomic resolution structural model of the yeast 26S proteasome.</title>
        <authorList>
            <person name="Beck F."/>
            <person name="Unverdorben P."/>
            <person name="Bohn S."/>
            <person name="Schweitzer A."/>
            <person name="Pfeifer G."/>
            <person name="Sakata E."/>
            <person name="Nickell S."/>
            <person name="Plitzko J.M."/>
            <person name="Villa E."/>
            <person name="Baumeister W."/>
            <person name="Forster F."/>
        </authorList>
    </citation>
    <scope>STRUCTURE BY ELECTRON MICROSCOPY (7.4 ANGSTROMS) OF THE 26S PROTEASOME</scope>
</reference>
<name>PRS6A_YEAST</name>
<keyword id="KW-0002">3D-structure</keyword>
<keyword id="KW-0007">Acetylation</keyword>
<keyword id="KW-0067">ATP-binding</keyword>
<keyword id="KW-0963">Cytoplasm</keyword>
<keyword id="KW-0903">Direct protein sequencing</keyword>
<keyword id="KW-0547">Nucleotide-binding</keyword>
<keyword id="KW-0539">Nucleus</keyword>
<keyword id="KW-0597">Phosphoprotein</keyword>
<keyword id="KW-0647">Proteasome</keyword>
<keyword id="KW-1185">Reference proteome</keyword>
<evidence type="ECO:0000250" key="1"/>
<evidence type="ECO:0000255" key="2"/>
<evidence type="ECO:0000269" key="3">
    <source>
    </source>
</evidence>
<evidence type="ECO:0000305" key="4"/>
<evidence type="ECO:0007744" key="5">
    <source>
    </source>
</evidence>
<evidence type="ECO:0007744" key="6">
    <source>
    </source>
</evidence>
<evidence type="ECO:0007829" key="7">
    <source>
        <dbReference type="PDB" id="3WHK"/>
    </source>
</evidence>
<dbReference type="EMBL" id="X73569">
    <property type="protein sequence ID" value="CAA51971.1"/>
    <property type="molecule type" value="Genomic_DNA"/>
</dbReference>
<dbReference type="EMBL" id="X90518">
    <property type="protein sequence ID" value="CAA62114.1"/>
    <property type="molecule type" value="Genomic_DNA"/>
</dbReference>
<dbReference type="EMBL" id="X94335">
    <property type="protein sequence ID" value="CAA64037.1"/>
    <property type="molecule type" value="Genomic_DNA"/>
</dbReference>
<dbReference type="EMBL" id="Z75025">
    <property type="protein sequence ID" value="CAA99315.1"/>
    <property type="molecule type" value="Genomic_DNA"/>
</dbReference>
<dbReference type="EMBL" id="BK006948">
    <property type="protein sequence ID" value="DAA10892.1"/>
    <property type="molecule type" value="Genomic_DNA"/>
</dbReference>
<dbReference type="PIR" id="S46605">
    <property type="entry name" value="S46605"/>
</dbReference>
<dbReference type="RefSeq" id="NP_014760.3">
    <property type="nucleotide sequence ID" value="NM_001183536.3"/>
</dbReference>
<dbReference type="PDB" id="3JCO">
    <property type="method" value="EM"/>
    <property type="resolution" value="4.80 A"/>
    <property type="chains" value="M=1-434"/>
</dbReference>
<dbReference type="PDB" id="3JCP">
    <property type="method" value="EM"/>
    <property type="resolution" value="4.60 A"/>
    <property type="chains" value="M=1-434"/>
</dbReference>
<dbReference type="PDB" id="3WHK">
    <property type="method" value="X-ray"/>
    <property type="resolution" value="2.60 A"/>
    <property type="chains" value="A/B/C/D/E/F/G/H=356-434"/>
</dbReference>
<dbReference type="PDB" id="3WHL">
    <property type="method" value="X-ray"/>
    <property type="resolution" value="4.00 A"/>
    <property type="chains" value="A/C/E/G=356-434"/>
</dbReference>
<dbReference type="PDB" id="4CR2">
    <property type="method" value="EM"/>
    <property type="resolution" value="7.70 A"/>
    <property type="chains" value="M=1-434"/>
</dbReference>
<dbReference type="PDB" id="4CR3">
    <property type="method" value="EM"/>
    <property type="resolution" value="9.30 A"/>
    <property type="chains" value="M=1-434"/>
</dbReference>
<dbReference type="PDB" id="4CR4">
    <property type="method" value="EM"/>
    <property type="resolution" value="8.80 A"/>
    <property type="chains" value="M=1-434"/>
</dbReference>
<dbReference type="PDB" id="5A5B">
    <property type="method" value="EM"/>
    <property type="resolution" value="9.50 A"/>
    <property type="chains" value="M=1-434"/>
</dbReference>
<dbReference type="PDB" id="5MP9">
    <property type="method" value="EM"/>
    <property type="resolution" value="4.10 A"/>
    <property type="chains" value="M=1-434"/>
</dbReference>
<dbReference type="PDB" id="5MPA">
    <property type="method" value="EM"/>
    <property type="resolution" value="4.50 A"/>
    <property type="chains" value="M=1-434"/>
</dbReference>
<dbReference type="PDB" id="5MPB">
    <property type="method" value="EM"/>
    <property type="resolution" value="7.80 A"/>
    <property type="chains" value="M=1-434"/>
</dbReference>
<dbReference type="PDB" id="5MPC">
    <property type="method" value="EM"/>
    <property type="resolution" value="7.70 A"/>
    <property type="chains" value="M=1-434"/>
</dbReference>
<dbReference type="PDB" id="5WVI">
    <property type="method" value="EM"/>
    <property type="resolution" value="6.30 A"/>
    <property type="chains" value="M=1-434"/>
</dbReference>
<dbReference type="PDB" id="5WVK">
    <property type="method" value="EM"/>
    <property type="resolution" value="4.20 A"/>
    <property type="chains" value="M=1-434"/>
</dbReference>
<dbReference type="PDB" id="6EF0">
    <property type="method" value="EM"/>
    <property type="resolution" value="4.43 A"/>
    <property type="chains" value="M=176-433"/>
</dbReference>
<dbReference type="PDB" id="6EF1">
    <property type="method" value="EM"/>
    <property type="resolution" value="4.73 A"/>
    <property type="chains" value="M=173-434"/>
</dbReference>
<dbReference type="PDB" id="6EF2">
    <property type="method" value="EM"/>
    <property type="resolution" value="4.27 A"/>
    <property type="chains" value="M=165-434"/>
</dbReference>
<dbReference type="PDB" id="6EF3">
    <property type="method" value="EM"/>
    <property type="resolution" value="4.17 A"/>
    <property type="chains" value="M=1-434"/>
</dbReference>
<dbReference type="PDB" id="6FVT">
    <property type="method" value="EM"/>
    <property type="resolution" value="4.10 A"/>
    <property type="chains" value="M=14-434"/>
</dbReference>
<dbReference type="PDB" id="6FVU">
    <property type="method" value="EM"/>
    <property type="resolution" value="4.50 A"/>
    <property type="chains" value="M=14-434"/>
</dbReference>
<dbReference type="PDB" id="6FVV">
    <property type="method" value="EM"/>
    <property type="resolution" value="5.40 A"/>
    <property type="chains" value="M=14-434"/>
</dbReference>
<dbReference type="PDB" id="6FVW">
    <property type="method" value="EM"/>
    <property type="resolution" value="4.50 A"/>
    <property type="chains" value="M=14-434"/>
</dbReference>
<dbReference type="PDB" id="6FVX">
    <property type="method" value="EM"/>
    <property type="resolution" value="4.90 A"/>
    <property type="chains" value="M=14-434"/>
</dbReference>
<dbReference type="PDB" id="6FVY">
    <property type="method" value="EM"/>
    <property type="resolution" value="6.10 A"/>
    <property type="chains" value="M=14-434"/>
</dbReference>
<dbReference type="PDB" id="6J2C">
    <property type="method" value="EM"/>
    <property type="resolution" value="7.00 A"/>
    <property type="chains" value="M=1-434"/>
</dbReference>
<dbReference type="PDB" id="6J2N">
    <property type="method" value="EM"/>
    <property type="resolution" value="7.50 A"/>
    <property type="chains" value="M=1-434"/>
</dbReference>
<dbReference type="PDB" id="6J2Q">
    <property type="method" value="EM"/>
    <property type="resolution" value="3.80 A"/>
    <property type="chains" value="M=1-434"/>
</dbReference>
<dbReference type="PDB" id="6J2X">
    <property type="method" value="EM"/>
    <property type="resolution" value="3.80 A"/>
    <property type="chains" value="M=1-434"/>
</dbReference>
<dbReference type="PDB" id="6J30">
    <property type="method" value="EM"/>
    <property type="resolution" value="4.50 A"/>
    <property type="chains" value="M=1-434"/>
</dbReference>
<dbReference type="PDB" id="7QO4">
    <property type="method" value="EM"/>
    <property type="resolution" value="7.00 A"/>
    <property type="chains" value="M=1-434"/>
</dbReference>
<dbReference type="PDB" id="7QO5">
    <property type="method" value="EM"/>
    <property type="resolution" value="6.00 A"/>
    <property type="chains" value="M=1-434"/>
</dbReference>
<dbReference type="PDBsum" id="3JCO"/>
<dbReference type="PDBsum" id="3JCP"/>
<dbReference type="PDBsum" id="3WHK"/>
<dbReference type="PDBsum" id="3WHL"/>
<dbReference type="PDBsum" id="4CR2"/>
<dbReference type="PDBsum" id="4CR3"/>
<dbReference type="PDBsum" id="4CR4"/>
<dbReference type="PDBsum" id="5A5B"/>
<dbReference type="PDBsum" id="5MP9"/>
<dbReference type="PDBsum" id="5MPA"/>
<dbReference type="PDBsum" id="5MPB"/>
<dbReference type="PDBsum" id="5MPC"/>
<dbReference type="PDBsum" id="5WVI"/>
<dbReference type="PDBsum" id="5WVK"/>
<dbReference type="PDBsum" id="6EF0"/>
<dbReference type="PDBsum" id="6EF1"/>
<dbReference type="PDBsum" id="6EF2"/>
<dbReference type="PDBsum" id="6EF3"/>
<dbReference type="PDBsum" id="6FVT"/>
<dbReference type="PDBsum" id="6FVU"/>
<dbReference type="PDBsum" id="6FVV"/>
<dbReference type="PDBsum" id="6FVW"/>
<dbReference type="PDBsum" id="6FVX"/>
<dbReference type="PDBsum" id="6FVY"/>
<dbReference type="PDBsum" id="6J2C"/>
<dbReference type="PDBsum" id="6J2N"/>
<dbReference type="PDBsum" id="6J2Q"/>
<dbReference type="PDBsum" id="6J2X"/>
<dbReference type="PDBsum" id="6J30"/>
<dbReference type="PDBsum" id="7QO4"/>
<dbReference type="PDBsum" id="7QO5"/>
<dbReference type="EMDB" id="EMD-14084"/>
<dbReference type="EMDB" id="EMD-3534"/>
<dbReference type="EMDB" id="EMD-3535"/>
<dbReference type="EMDB" id="EMD-3536"/>
<dbReference type="EMDB" id="EMD-3537"/>
<dbReference type="EMDB" id="EMD-4321"/>
<dbReference type="EMDB" id="EMD-4322"/>
<dbReference type="EMDB" id="EMD-4323"/>
<dbReference type="EMDB" id="EMD-4324"/>
<dbReference type="EMDB" id="EMD-6693"/>
<dbReference type="EMDB" id="EMD-6694"/>
<dbReference type="EMDB" id="EMD-9042"/>
<dbReference type="EMDB" id="EMD-9043"/>
<dbReference type="EMDB" id="EMD-9044"/>
<dbReference type="EMDB" id="EMD-9045"/>
<dbReference type="EMDB" id="EMD-9769"/>
<dbReference type="EMDB" id="EMD-9770"/>
<dbReference type="EMDB" id="EMD-9771"/>
<dbReference type="EMDB" id="EMD-9772"/>
<dbReference type="EMDB" id="EMD-9773"/>
<dbReference type="SMR" id="P33297"/>
<dbReference type="BioGRID" id="34513">
    <property type="interactions" value="756"/>
</dbReference>
<dbReference type="ComplexPortal" id="CPX-2262">
    <property type="entry name" value="26S proteasome complex"/>
</dbReference>
<dbReference type="DIP" id="DIP-1590N"/>
<dbReference type="FunCoup" id="P33297">
    <property type="interactions" value="1210"/>
</dbReference>
<dbReference type="IntAct" id="P33297">
    <property type="interactions" value="72"/>
</dbReference>
<dbReference type="MINT" id="P33297"/>
<dbReference type="STRING" id="4932.YOR117W"/>
<dbReference type="iPTMnet" id="P33297"/>
<dbReference type="PaxDb" id="4932-YOR117W"/>
<dbReference type="PeptideAtlas" id="P33297"/>
<dbReference type="EnsemblFungi" id="YOR117W_mRNA">
    <property type="protein sequence ID" value="YOR117W"/>
    <property type="gene ID" value="YOR117W"/>
</dbReference>
<dbReference type="GeneID" id="854284"/>
<dbReference type="KEGG" id="sce:YOR117W"/>
<dbReference type="AGR" id="SGD:S000005643"/>
<dbReference type="SGD" id="S000005643">
    <property type="gene designation" value="RPT5"/>
</dbReference>
<dbReference type="VEuPathDB" id="FungiDB:YOR117W"/>
<dbReference type="eggNOG" id="KOG0652">
    <property type="taxonomic scope" value="Eukaryota"/>
</dbReference>
<dbReference type="GeneTree" id="ENSGT01020000230346"/>
<dbReference type="HOGENOM" id="CLU_000688_2_4_1"/>
<dbReference type="InParanoid" id="P33297"/>
<dbReference type="OMA" id="NKISHEH"/>
<dbReference type="OrthoDB" id="9443236at2759"/>
<dbReference type="BioCyc" id="YEAST:G3O-33646-MONOMER"/>
<dbReference type="BRENDA" id="5.6.1.5">
    <property type="organism ID" value="984"/>
</dbReference>
<dbReference type="Reactome" id="R-SCE-1236978">
    <property type="pathway name" value="Cross-presentation of soluble exogenous antigens (endosomes)"/>
</dbReference>
<dbReference type="Reactome" id="R-SCE-5668541">
    <property type="pathway name" value="TNFR2 non-canonical NF-kB pathway"/>
</dbReference>
<dbReference type="Reactome" id="R-SCE-5687128">
    <property type="pathway name" value="MAPK6/MAPK4 signaling"/>
</dbReference>
<dbReference type="Reactome" id="R-SCE-5689880">
    <property type="pathway name" value="Ub-specific processing proteases"/>
</dbReference>
<dbReference type="Reactome" id="R-SCE-6798695">
    <property type="pathway name" value="Neutrophil degranulation"/>
</dbReference>
<dbReference type="Reactome" id="R-SCE-68949">
    <property type="pathway name" value="Orc1 removal from chromatin"/>
</dbReference>
<dbReference type="Reactome" id="R-SCE-69017">
    <property type="pathway name" value="CDK-mediated phosphorylation and removal of Cdc6"/>
</dbReference>
<dbReference type="Reactome" id="R-SCE-69601">
    <property type="pathway name" value="Ubiquitin Mediated Degradation of Phosphorylated Cdc25A"/>
</dbReference>
<dbReference type="Reactome" id="R-SCE-8854050">
    <property type="pathway name" value="FBXL7 down-regulates AURKA during mitotic entry and in early mitosis"/>
</dbReference>
<dbReference type="Reactome" id="R-SCE-8948751">
    <property type="pathway name" value="Regulation of PTEN stability and activity"/>
</dbReference>
<dbReference type="Reactome" id="R-SCE-8951664">
    <property type="pathway name" value="Neddylation"/>
</dbReference>
<dbReference type="Reactome" id="R-SCE-9755511">
    <property type="pathway name" value="KEAP1-NFE2L2 pathway"/>
</dbReference>
<dbReference type="Reactome" id="R-SCE-983168">
    <property type="pathway name" value="Antigen processing: Ubiquitination &amp; Proteasome degradation"/>
</dbReference>
<dbReference type="Reactome" id="R-SCE-9907900">
    <property type="pathway name" value="Proteasome assembly"/>
</dbReference>
<dbReference type="BioGRID-ORCS" id="854284">
    <property type="hits" value="7 hits in 10 CRISPR screens"/>
</dbReference>
<dbReference type="CD-CODE" id="E03F929F">
    <property type="entry name" value="Stress granule"/>
</dbReference>
<dbReference type="EvolutionaryTrace" id="P33297"/>
<dbReference type="PRO" id="PR:P33297"/>
<dbReference type="Proteomes" id="UP000002311">
    <property type="component" value="Chromosome XV"/>
</dbReference>
<dbReference type="RNAct" id="P33297">
    <property type="molecule type" value="protein"/>
</dbReference>
<dbReference type="GO" id="GO:0005737">
    <property type="term" value="C:cytoplasm"/>
    <property type="evidence" value="ECO:0007669"/>
    <property type="project" value="UniProtKB-SubCell"/>
</dbReference>
<dbReference type="GO" id="GO:0005634">
    <property type="term" value="C:nucleus"/>
    <property type="evidence" value="ECO:0007669"/>
    <property type="project" value="UniProtKB-SubCell"/>
</dbReference>
<dbReference type="GO" id="GO:0000502">
    <property type="term" value="C:proteasome complex"/>
    <property type="evidence" value="ECO:0000353"/>
    <property type="project" value="ComplexPortal"/>
</dbReference>
<dbReference type="GO" id="GO:0008540">
    <property type="term" value="C:proteasome regulatory particle, base subcomplex"/>
    <property type="evidence" value="ECO:0000314"/>
    <property type="project" value="SGD"/>
</dbReference>
<dbReference type="GO" id="GO:0005524">
    <property type="term" value="F:ATP binding"/>
    <property type="evidence" value="ECO:0007669"/>
    <property type="project" value="UniProtKB-KW"/>
</dbReference>
<dbReference type="GO" id="GO:0016887">
    <property type="term" value="F:ATP hydrolysis activity"/>
    <property type="evidence" value="ECO:0000250"/>
    <property type="project" value="SGD"/>
</dbReference>
<dbReference type="GO" id="GO:0036402">
    <property type="term" value="F:proteasome-activating activity"/>
    <property type="evidence" value="ECO:0000318"/>
    <property type="project" value="GO_Central"/>
</dbReference>
<dbReference type="GO" id="GO:0045899">
    <property type="term" value="P:positive regulation of RNA polymerase II transcription preinitiation complex assembly"/>
    <property type="evidence" value="ECO:0000315"/>
    <property type="project" value="SGD"/>
</dbReference>
<dbReference type="GO" id="GO:0070682">
    <property type="term" value="P:proteasome regulatory particle assembly"/>
    <property type="evidence" value="ECO:0000315"/>
    <property type="project" value="SGD"/>
</dbReference>
<dbReference type="GO" id="GO:0043161">
    <property type="term" value="P:proteasome-mediated ubiquitin-dependent protein catabolic process"/>
    <property type="evidence" value="ECO:0000314"/>
    <property type="project" value="ComplexPortal"/>
</dbReference>
<dbReference type="GO" id="GO:0006511">
    <property type="term" value="P:ubiquitin-dependent protein catabolic process"/>
    <property type="evidence" value="ECO:0000315"/>
    <property type="project" value="SGD"/>
</dbReference>
<dbReference type="FunFam" id="1.10.8.60:FF:000009">
    <property type="entry name" value="26S protease regulatory subunit 6A"/>
    <property type="match status" value="1"/>
</dbReference>
<dbReference type="FunFam" id="2.40.50.140:FF:000076">
    <property type="entry name" value="26S protease regulatory subunit 6A"/>
    <property type="match status" value="1"/>
</dbReference>
<dbReference type="FunFam" id="3.40.50.300:FF:000037">
    <property type="entry name" value="26S protease regulatory subunit 6A"/>
    <property type="match status" value="1"/>
</dbReference>
<dbReference type="Gene3D" id="1.10.8.60">
    <property type="match status" value="1"/>
</dbReference>
<dbReference type="Gene3D" id="2.40.50.140">
    <property type="entry name" value="Nucleic acid-binding proteins"/>
    <property type="match status" value="1"/>
</dbReference>
<dbReference type="Gene3D" id="3.40.50.300">
    <property type="entry name" value="P-loop containing nucleotide triphosphate hydrolases"/>
    <property type="match status" value="1"/>
</dbReference>
<dbReference type="InterPro" id="IPR050221">
    <property type="entry name" value="26S_Proteasome_ATPase"/>
</dbReference>
<dbReference type="InterPro" id="IPR003593">
    <property type="entry name" value="AAA+_ATPase"/>
</dbReference>
<dbReference type="InterPro" id="IPR041569">
    <property type="entry name" value="AAA_lid_3"/>
</dbReference>
<dbReference type="InterPro" id="IPR003959">
    <property type="entry name" value="ATPase_AAA_core"/>
</dbReference>
<dbReference type="InterPro" id="IPR003960">
    <property type="entry name" value="ATPase_AAA_CS"/>
</dbReference>
<dbReference type="InterPro" id="IPR012340">
    <property type="entry name" value="NA-bd_OB-fold"/>
</dbReference>
<dbReference type="InterPro" id="IPR027417">
    <property type="entry name" value="P-loop_NTPase"/>
</dbReference>
<dbReference type="InterPro" id="IPR032501">
    <property type="entry name" value="Prot_ATP_ID_OB_2nd"/>
</dbReference>
<dbReference type="PANTHER" id="PTHR23073">
    <property type="entry name" value="26S PROTEASOME REGULATORY SUBUNIT"/>
    <property type="match status" value="1"/>
</dbReference>
<dbReference type="Pfam" id="PF00004">
    <property type="entry name" value="AAA"/>
    <property type="match status" value="1"/>
</dbReference>
<dbReference type="Pfam" id="PF17862">
    <property type="entry name" value="AAA_lid_3"/>
    <property type="match status" value="1"/>
</dbReference>
<dbReference type="Pfam" id="PF16450">
    <property type="entry name" value="Prot_ATP_ID_OB_C"/>
    <property type="match status" value="1"/>
</dbReference>
<dbReference type="SMART" id="SM00382">
    <property type="entry name" value="AAA"/>
    <property type="match status" value="1"/>
</dbReference>
<dbReference type="SUPFAM" id="SSF52540">
    <property type="entry name" value="P-loop containing nucleoside triphosphate hydrolases"/>
    <property type="match status" value="1"/>
</dbReference>
<dbReference type="PROSITE" id="PS00674">
    <property type="entry name" value="AAA"/>
    <property type="match status" value="1"/>
</dbReference>
<comment type="function">
    <text evidence="1">The 26S proteasome is involved in the ATP-dependent degradation of ubiquitinated proteins. The regulatory (or ATPase) complex confers ATP dependency and substrate specificity to the 26S complex (By similarity).</text>
</comment>
<comment type="interaction">
    <interactant intactId="EBI-13920">
        <id>P33297</id>
    </interactant>
    <interactant intactId="EBI-21152">
        <id>P38348</id>
        <label>HSM3</label>
    </interactant>
    <organismsDiffer>false</organismsDiffer>
    <experiments>7</experiments>
</comment>
<comment type="interaction">
    <interactant intactId="EBI-13920">
        <id>P33297</id>
    </interactant>
    <interactant intactId="EBI-14024">
        <id>P40555</id>
        <label>NAS2</label>
    </interactant>
    <organismsDiffer>false</organismsDiffer>
    <experiments>8</experiments>
</comment>
<comment type="interaction">
    <interactant intactId="EBI-13920">
        <id>P33297</id>
    </interactant>
    <interactant intactId="EBI-14668">
        <id>P32628</id>
        <label>RAD23</label>
    </interactant>
    <organismsDiffer>false</organismsDiffer>
    <experiments>2</experiments>
</comment>
<comment type="interaction">
    <interactant intactId="EBI-13920">
        <id>P33297</id>
    </interactant>
    <interactant intactId="EBI-15913">
        <id>P38764</id>
        <label>RPN1</label>
    </interactant>
    <organismsDiffer>false</organismsDiffer>
    <experiments>5</experiments>
</comment>
<comment type="interaction">
    <interactant intactId="EBI-13920">
        <id>P33297</id>
    </interactant>
    <interactant intactId="EBI-15949">
        <id>P38886</id>
        <label>RPN10</label>
    </interactant>
    <organismsDiffer>false</organismsDiffer>
    <experiments>3</experiments>
</comment>
<comment type="interaction">
    <interactant intactId="EBI-13920">
        <id>P33297</id>
    </interactant>
    <interactant intactId="EBI-11219">
        <id>P43588</id>
        <label>RPN11</label>
    </interactant>
    <organismsDiffer>false</organismsDiffer>
    <experiments>2</experiments>
</comment>
<comment type="interaction">
    <interactant intactId="EBI-13920">
        <id>P33297</id>
    </interactant>
    <interactant intactId="EBI-23691">
        <id>P53196</id>
        <label>RPN14</label>
    </interactant>
    <organismsDiffer>false</organismsDiffer>
    <experiments>6</experiments>
</comment>
<comment type="interaction">
    <interactant intactId="EBI-13920">
        <id>P33297</id>
    </interactant>
    <interactant intactId="EBI-13910">
        <id>P33299</id>
        <label>RPT1</label>
    </interactant>
    <organismsDiffer>false</organismsDiffer>
    <experiments>6</experiments>
</comment>
<comment type="interaction">
    <interactant intactId="EBI-13920">
        <id>P33297</id>
    </interactant>
    <interactant intactId="EBI-13905">
        <id>P33298</id>
        <label>RPT3</label>
    </interactant>
    <organismsDiffer>false</organismsDiffer>
    <experiments>7</experiments>
</comment>
<comment type="interaction">
    <interactant intactId="EBI-13920">
        <id>P33297</id>
    </interactant>
    <interactant intactId="EBI-18520">
        <id>P53549</id>
        <label>RPT4</label>
    </interactant>
    <organismsDiffer>false</organismsDiffer>
    <experiments>11</experiments>
</comment>
<comment type="interaction">
    <interactant intactId="EBI-13920">
        <id>P33297</id>
    </interactant>
    <interactant intactId="EBI-13914">
        <id>Q01939</id>
        <label>RPT6</label>
    </interactant>
    <organismsDiffer>false</organismsDiffer>
    <experiments>3</experiments>
</comment>
<comment type="subcellular location">
    <subcellularLocation>
        <location evidence="4">Cytoplasm</location>
    </subcellularLocation>
    <subcellularLocation>
        <location evidence="4">Nucleus</location>
    </subcellularLocation>
</comment>
<comment type="PTM">
    <text evidence="3">N-acetylated by NAT1.</text>
</comment>
<comment type="similarity">
    <text evidence="4">Belongs to the AAA ATPase family.</text>
</comment>
<gene>
    <name type="primary">RPT5</name>
    <name type="synonym">YTA1</name>
    <name type="ordered locus">YOR117W</name>
    <name type="ORF">O3258</name>
    <name type="ORF">YOR3258W</name>
</gene>
<organism>
    <name type="scientific">Saccharomyces cerevisiae (strain ATCC 204508 / S288c)</name>
    <name type="common">Baker's yeast</name>
    <dbReference type="NCBI Taxonomy" id="559292"/>
    <lineage>
        <taxon>Eukaryota</taxon>
        <taxon>Fungi</taxon>
        <taxon>Dikarya</taxon>
        <taxon>Ascomycota</taxon>
        <taxon>Saccharomycotina</taxon>
        <taxon>Saccharomycetes</taxon>
        <taxon>Saccharomycetales</taxon>
        <taxon>Saccharomycetaceae</taxon>
        <taxon>Saccharomyces</taxon>
    </lineage>
</organism>
<proteinExistence type="evidence at protein level"/>
<protein>
    <recommendedName>
        <fullName>26S proteasome regulatory subunit 6A</fullName>
    </recommendedName>
    <alternativeName>
        <fullName>Tat-binding protein homolog 1</fullName>
        <shortName>TBP-1</shortName>
    </alternativeName>
</protein>
<feature type="initiator methionine" description="Removed" evidence="3 6">
    <location>
        <position position="1"/>
    </location>
</feature>
<feature type="chain" id="PRO_0000084708" description="26S proteasome regulatory subunit 6A">
    <location>
        <begin position="2"/>
        <end position="434"/>
    </location>
</feature>
<feature type="binding site" evidence="2">
    <location>
        <begin position="222"/>
        <end position="229"/>
    </location>
    <ligand>
        <name>ATP</name>
        <dbReference type="ChEBI" id="CHEBI:30616"/>
    </ligand>
</feature>
<feature type="modified residue" description="N-acetylalanine" evidence="3 6">
    <location>
        <position position="2"/>
    </location>
</feature>
<feature type="modified residue" description="Phosphotyrosine" evidence="5">
    <location>
        <position position="180"/>
    </location>
</feature>
<feature type="helix" evidence="7">
    <location>
        <begin position="356"/>
        <end position="365"/>
    </location>
</feature>
<feature type="helix" evidence="7">
    <location>
        <begin position="376"/>
        <end position="381"/>
    </location>
</feature>
<feature type="turn" evidence="7">
    <location>
        <begin position="382"/>
        <end position="385"/>
    </location>
</feature>
<feature type="helix" evidence="7">
    <location>
        <begin position="388"/>
        <end position="404"/>
    </location>
</feature>
<feature type="strand" evidence="7">
    <location>
        <begin position="408"/>
        <end position="410"/>
    </location>
</feature>
<feature type="helix" evidence="7">
    <location>
        <begin position="412"/>
        <end position="427"/>
    </location>
</feature>